<name>INT8_XENLA</name>
<gene>
    <name type="primary">ints8</name>
</gene>
<accession>Q4V847</accession>
<proteinExistence type="evidence at transcript level"/>
<reference key="1">
    <citation type="submission" date="2005-06" db="EMBL/GenBank/DDBJ databases">
        <authorList>
            <consortium name="NIH - Xenopus Gene Collection (XGC) project"/>
        </authorList>
    </citation>
    <scope>NUCLEOTIDE SEQUENCE [LARGE SCALE MRNA]</scope>
    <source>
        <tissue>Ovary</tissue>
    </source>
</reference>
<organism>
    <name type="scientific">Xenopus laevis</name>
    <name type="common">African clawed frog</name>
    <dbReference type="NCBI Taxonomy" id="8355"/>
    <lineage>
        <taxon>Eukaryota</taxon>
        <taxon>Metazoa</taxon>
        <taxon>Chordata</taxon>
        <taxon>Craniata</taxon>
        <taxon>Vertebrata</taxon>
        <taxon>Euteleostomi</taxon>
        <taxon>Amphibia</taxon>
        <taxon>Batrachia</taxon>
        <taxon>Anura</taxon>
        <taxon>Pipoidea</taxon>
        <taxon>Pipidae</taxon>
        <taxon>Xenopodinae</taxon>
        <taxon>Xenopus</taxon>
        <taxon>Xenopus</taxon>
    </lineage>
</organism>
<keyword id="KW-0158">Chromosome</keyword>
<keyword id="KW-0539">Nucleus</keyword>
<keyword id="KW-1185">Reference proteome</keyword>
<keyword id="KW-0677">Repeat</keyword>
<keyword id="KW-0802">TPR repeat</keyword>
<protein>
    <recommendedName>
        <fullName>Integrator complex subunit 8</fullName>
        <shortName>Int8</shortName>
    </recommendedName>
</protein>
<feature type="chain" id="PRO_0000259555" description="Integrator complex subunit 8">
    <location>
        <begin position="1"/>
        <end position="991"/>
    </location>
</feature>
<feature type="repeat" description="TPR 1">
    <location>
        <begin position="250"/>
        <end position="288"/>
    </location>
</feature>
<feature type="repeat" description="TPR 2">
    <location>
        <begin position="319"/>
        <end position="355"/>
    </location>
</feature>
<feature type="repeat" description="TPR 3">
    <location>
        <begin position="569"/>
        <end position="602"/>
    </location>
</feature>
<feature type="repeat" description="TPR 4">
    <location>
        <begin position="829"/>
        <end position="862"/>
    </location>
</feature>
<feature type="region of interest" description="Disordered" evidence="3">
    <location>
        <begin position="1"/>
        <end position="22"/>
    </location>
</feature>
<feature type="short sequence motif" description="WFEF motif" evidence="1">
    <location>
        <begin position="24"/>
        <end position="29"/>
    </location>
</feature>
<feature type="compositionally biased region" description="Basic and acidic residues" evidence="3">
    <location>
        <begin position="1"/>
        <end position="10"/>
    </location>
</feature>
<feature type="compositionally biased region" description="Polar residues" evidence="3">
    <location>
        <begin position="11"/>
        <end position="22"/>
    </location>
</feature>
<evidence type="ECO:0000250" key="1">
    <source>
        <dbReference type="UniProtKB" id="A1ZAK1"/>
    </source>
</evidence>
<evidence type="ECO:0000250" key="2">
    <source>
        <dbReference type="UniProtKB" id="Q75QN2"/>
    </source>
</evidence>
<evidence type="ECO:0000256" key="3">
    <source>
        <dbReference type="SAM" id="MobiDB-lite"/>
    </source>
</evidence>
<evidence type="ECO:0000305" key="4"/>
<comment type="function">
    <text evidence="2">Component of the integrator complex, a multiprotein complex that terminates RNA polymerase II (Pol II) transcription in the promoter-proximal region of genes. The integrator complex provides a quality checkpoint during transcription elongation by driving premature transcription termination of transcripts that are unfavorably configured for transcriptional elongation: the complex terminates transcription by (1) catalyzing dephosphorylation of the C-terminal domain (CTD) of Pol II subunit POLR2A/RPB1 and SUPT5H/SPT5, (2) degrading the exiting nascent RNA transcript via endonuclease activity and (3) promoting the release of Pol II from bound DNA. The integrator complex is also involved in terminating the synthesis of non-coding Pol II transcripts, such as enhancer RNAs (eRNAs), small nuclear RNAs (snRNAs), telomerase RNAs and long non-coding RNAs (lncRNAs). Within the integrator complex, INTS8 is required for the recruitment of protein phosphatase 2A (PP2A) to transcription pause-release checkpoint.</text>
</comment>
<comment type="subunit">
    <text evidence="2">Component of the Integrator complex, composed of core subunits INTS1, INTS2, INTS3, INTS4, INTS5, INTS6, INTS7, INTS8, INTS9/RC74, INTS10, INTS11/CPSF3L, INTS12, INTS13, INTS14 and INTS15. The core complex associates with protein phosphatase 2A subunits PPP2CA and PPP2R1A, to form the Integrator-PP2A (INTAC) complex.</text>
</comment>
<comment type="subcellular location">
    <subcellularLocation>
        <location evidence="2">Nucleus</location>
    </subcellularLocation>
    <subcellularLocation>
        <location evidence="2">Chromosome</location>
    </subcellularLocation>
    <text evidence="2">Associates with chromatin and transcription pause-release checkpoint.</text>
</comment>
<comment type="domain">
    <text evidence="2">The WFEF motif is required for the recruitment of protein phosphatase 2A (PP2A) to transcription pause-release checkpoint.</text>
</comment>
<comment type="similarity">
    <text evidence="4">Belongs to the Integrator subunit 8 family.</text>
</comment>
<sequence>MSAEAADREAATSSRPCTPPQTSWFEFLLDDSLLEKHLQKPHSDPPPVQLIVQFLEQASKPTLNEQNQVQPPTDNKRNRTLKLLALKVAAHLKWNLDVLEKSLSVPVLNMLLNELLCASKVPPGTKHVDLDLSTLPPTTVMAVTLYNRWAIRTIVQSGFPVKPVKQGPQQPNVMNQIQQEKELTENILKVLKEQAEDSITVLEGALQLKRDFYVHTMRTLDLLAVEPGMVNGETENSTAGFKISSDEMQCQGCYDLGAVYFLQGPTNPSCYEKARDHFFRTKQLVSKIGAASDHYAIDEKRLAGYCQACGVLAPSNVVSQPATPYSQIHNFMKTNNYQGILKIFLEDHLNNSLPDQFRQSVLRELFQKSQQGNGALAELCFKVCACNTVYDILHGQPVTVQFHQLFMKPSKEKIDFLLEVCSRSLMSDQASEASKRKIATFLKNLCLEIEDLQLVFMISSHELFMKMLTDEESKMVVEHLRKKTSRVSMCTKPITSFYDIPASASVNIGQLEHQLILTVDPWRIRQILIELHGMTSDRQYWKVSSKWEVPTIYSGSILGIKDNLTRDLVYILLAKGLHCSAIKDYPRAKQLLSACLELVTEFSPKLRQVMLNEMLLLDIYTYEAVSAQERPPPELISRVRGYLEMRIPDIPLRQVVAEECVAFLLNWRENECLTLQVPASLVQSNPYVKLGQLLAATCKELPGPDSRRTAKDLWEVVVQICSVSNQHKRNNDGRVCLIKNRDSTMGIMYRNELVSFIKKLREPLVLTTLLSLFVKLHNLREDIVNDITAEHISIWPSCIPNLQAVDFDAVAVTVKELVSYALTINSNSHSWLTIQADIYFATNEYSAALNYYLQAGAVCSDFFTKQVPPEVYTDQVIKRMIKCCSMLNCHTQVAILCQFLREIDYKTAFKALQEQNSHDGMDSYYDYIWDVTILEYLTYLHHKRGETDKRQIAIKAIGQTELNASNPDEVLQLAAQRRKKKFLQSMAKLYF</sequence>
<dbReference type="EMBL" id="BC097549">
    <property type="protein sequence ID" value="AAH97549.1"/>
    <property type="molecule type" value="mRNA"/>
</dbReference>
<dbReference type="RefSeq" id="NP_001089452.1">
    <property type="nucleotide sequence ID" value="NM_001095983.1"/>
</dbReference>
<dbReference type="SMR" id="Q4V847"/>
<dbReference type="BioGRID" id="592283">
    <property type="interactions" value="1"/>
</dbReference>
<dbReference type="GeneID" id="734502"/>
<dbReference type="KEGG" id="xla:734502"/>
<dbReference type="AGR" id="Xenbase:XB-GENE-980135"/>
<dbReference type="CTD" id="734502"/>
<dbReference type="Xenbase" id="XB-GENE-980135">
    <property type="gene designation" value="ints8.S"/>
</dbReference>
<dbReference type="OrthoDB" id="64340at2759"/>
<dbReference type="Proteomes" id="UP000186698">
    <property type="component" value="Chromosome 6S"/>
</dbReference>
<dbReference type="Bgee" id="734502">
    <property type="expression patterns" value="Expressed in neurula embryo and 19 other cell types or tissues"/>
</dbReference>
<dbReference type="GO" id="GO:0000785">
    <property type="term" value="C:chromatin"/>
    <property type="evidence" value="ECO:0000250"/>
    <property type="project" value="UniProtKB"/>
</dbReference>
<dbReference type="GO" id="GO:0160232">
    <property type="term" value="C:INTAC complex"/>
    <property type="evidence" value="ECO:0000250"/>
    <property type="project" value="UniProtKB"/>
</dbReference>
<dbReference type="GO" id="GO:0032039">
    <property type="term" value="C:integrator complex"/>
    <property type="evidence" value="ECO:0000318"/>
    <property type="project" value="GO_Central"/>
</dbReference>
<dbReference type="GO" id="GO:0005634">
    <property type="term" value="C:nucleus"/>
    <property type="evidence" value="ECO:0000250"/>
    <property type="project" value="UniProtKB"/>
</dbReference>
<dbReference type="GO" id="GO:0071168">
    <property type="term" value="P:protein localization to chromatin"/>
    <property type="evidence" value="ECO:0000250"/>
    <property type="project" value="UniProtKB"/>
</dbReference>
<dbReference type="GO" id="GO:0160240">
    <property type="term" value="P:RNA polymerase II transcription initiation surveillance"/>
    <property type="evidence" value="ECO:0000250"/>
    <property type="project" value="UniProtKB"/>
</dbReference>
<dbReference type="GO" id="GO:0034472">
    <property type="term" value="P:snRNA 3'-end processing"/>
    <property type="evidence" value="ECO:0000318"/>
    <property type="project" value="GO_Central"/>
</dbReference>
<dbReference type="InterPro" id="IPR038751">
    <property type="entry name" value="Int8"/>
</dbReference>
<dbReference type="InterPro" id="IPR011990">
    <property type="entry name" value="TPR-like_helical_dom_sf"/>
</dbReference>
<dbReference type="PANTHER" id="PTHR13350">
    <property type="entry name" value="INTEGRATOR COMPLEX SUBUNIT 8"/>
    <property type="match status" value="1"/>
</dbReference>
<dbReference type="PANTHER" id="PTHR13350:SF1">
    <property type="entry name" value="INTEGRATOR COMPLEX SUBUNIT 8"/>
    <property type="match status" value="1"/>
</dbReference>
<dbReference type="SUPFAM" id="SSF48452">
    <property type="entry name" value="TPR-like"/>
    <property type="match status" value="1"/>
</dbReference>